<accession>P0DXT2</accession>
<proteinExistence type="evidence at protein level"/>
<name>TX2A_POGRU</name>
<evidence type="ECO:0000250" key="1">
    <source>
        <dbReference type="UniProtKB" id="A0A8U0LTF0"/>
    </source>
</evidence>
<evidence type="ECO:0000250" key="2">
    <source>
        <dbReference type="UniProtKB" id="P0DRD0"/>
    </source>
</evidence>
<evidence type="ECO:0000250" key="3">
    <source>
        <dbReference type="UniProtKB" id="P0DX61"/>
    </source>
</evidence>
<evidence type="ECO:0000255" key="4"/>
<evidence type="ECO:0000303" key="5">
    <source>
    </source>
</evidence>
<evidence type="ECO:0000305" key="6"/>
<evidence type="ECO:0000305" key="7">
    <source>
    </source>
</evidence>
<feature type="signal peptide" evidence="4">
    <location>
        <begin position="1"/>
        <end position="23"/>
    </location>
</feature>
<feature type="propeptide" id="PRO_0000461243" evidence="7">
    <location>
        <begin position="24"/>
        <end position="61"/>
    </location>
</feature>
<feature type="peptide" id="PRO_0000461244" description="Myrmicitoxin(1)-Pr2a" evidence="7">
    <location>
        <begin position="62"/>
        <end position="88"/>
    </location>
</feature>
<feature type="modified residue" description="Asparagine amide" evidence="7">
    <location>
        <position position="88"/>
    </location>
</feature>
<sequence>MEIPKLLYIAVIAIGLSGSLTCATPLANPWADPEAEANPEAKAIAEATAEAIAEALAEPEPALPALPLLAFLFSLPAVQHWIEKNWING</sequence>
<organism>
    <name type="scientific">Pogonomyrmex rugosus</name>
    <name type="common">Desert harvester ant</name>
    <dbReference type="NCBI Taxonomy" id="144042"/>
    <lineage>
        <taxon>Eukaryota</taxon>
        <taxon>Metazoa</taxon>
        <taxon>Ecdysozoa</taxon>
        <taxon>Arthropoda</taxon>
        <taxon>Hexapoda</taxon>
        <taxon>Insecta</taxon>
        <taxon>Pterygota</taxon>
        <taxon>Neoptera</taxon>
        <taxon>Endopterygota</taxon>
        <taxon>Hymenoptera</taxon>
        <taxon>Apocrita</taxon>
        <taxon>Aculeata</taxon>
        <taxon>Formicoidea</taxon>
        <taxon>Formicidae</taxon>
        <taxon>Myrmicinae</taxon>
        <taxon>Pogonomyrmex</taxon>
    </lineage>
</organism>
<comment type="function">
    <text evidence="1 2 3">Vertebrate-selective toxin that causes pain by targeting voltage-gated sodium channels.</text>
</comment>
<comment type="subcellular location">
    <subcellularLocation>
        <location evidence="7">Secreted</location>
    </subcellularLocation>
</comment>
<comment type="tissue specificity">
    <text evidence="7">Expressed by the venom gland.</text>
</comment>
<comment type="similarity">
    <text evidence="6">Belongs to the formicidae venom clade 1 family.</text>
</comment>
<dbReference type="EMBL" id="OR128474">
    <property type="protein sequence ID" value="WMI02512.1"/>
    <property type="molecule type" value="mRNA"/>
</dbReference>
<dbReference type="GO" id="GO:0005576">
    <property type="term" value="C:extracellular region"/>
    <property type="evidence" value="ECO:0007669"/>
    <property type="project" value="UniProtKB-SubCell"/>
</dbReference>
<dbReference type="GO" id="GO:0017080">
    <property type="term" value="F:sodium channel regulator activity"/>
    <property type="evidence" value="ECO:0007669"/>
    <property type="project" value="UniProtKB-KW"/>
</dbReference>
<dbReference type="GO" id="GO:0090729">
    <property type="term" value="F:toxin activity"/>
    <property type="evidence" value="ECO:0007669"/>
    <property type="project" value="UniProtKB-KW"/>
</dbReference>
<protein>
    <recommendedName>
        <fullName evidence="5">Myrmicitoxin(1)-Pr2a</fullName>
        <shortName evidence="5">MYRTX(1)-Pr2a</shortName>
    </recommendedName>
</protein>
<reference key="1">
    <citation type="journal article" date="2024" name="J. Biol. Chem.">
        <title>Peptide toxins that target vertebrate voltage-gated sodium channels underly the painful stings of harvester ants.</title>
        <authorList>
            <person name="Robinson S.D."/>
            <person name="Deuis J.R."/>
            <person name="Niu P."/>
            <person name="Touchard A."/>
            <person name="Mueller A."/>
            <person name="Schendel V."/>
            <person name="Brinkwirth N."/>
            <person name="King G.F."/>
            <person name="Vetter I."/>
            <person name="Schmidt J.O."/>
        </authorList>
    </citation>
    <scope>NUCLEOTIDE SEQUENCE [MRNA]</scope>
    <scope>PROBABLE AMIDATION AT ASN-88</scope>
    <source>
        <tissue>Venom gland</tissue>
    </source>
</reference>
<keyword id="KW-0027">Amidation</keyword>
<keyword id="KW-0872">Ion channel impairing toxin</keyword>
<keyword id="KW-0528">Neurotoxin</keyword>
<keyword id="KW-0964">Secreted</keyword>
<keyword id="KW-0732">Signal</keyword>
<keyword id="KW-0800">Toxin</keyword>
<keyword id="KW-0738">Voltage-gated sodium channel impairing toxin</keyword>